<feature type="chain" id="PRO_0000223942" description="Folliculin">
    <location>
        <begin position="1"/>
        <end position="579"/>
    </location>
</feature>
<feature type="domain" description="uDENN FLCN/SMCR8-type" evidence="4">
    <location>
        <begin position="86"/>
        <end position="242"/>
    </location>
</feature>
<feature type="domain" description="cDENN FLCN/SMCR8-type" evidence="4">
    <location>
        <begin position="339"/>
        <end position="491"/>
    </location>
</feature>
<feature type="domain" description="dDENN FLCN/SMCR8-type" evidence="4">
    <location>
        <begin position="493"/>
        <end position="558"/>
    </location>
</feature>
<feature type="region of interest" description="Disordered" evidence="5">
    <location>
        <begin position="32"/>
        <end position="82"/>
    </location>
</feature>
<feature type="region of interest" description="Disordered" evidence="5">
    <location>
        <begin position="294"/>
        <end position="320"/>
    </location>
</feature>
<feature type="coiled-coil region" evidence="3">
    <location>
        <begin position="287"/>
        <end position="310"/>
    </location>
</feature>
<feature type="compositionally biased region" description="Acidic residues" evidence="5">
    <location>
        <begin position="294"/>
        <end position="308"/>
    </location>
</feature>
<feature type="site" description="Essential for GTPase activation (GAP) activity" evidence="1">
    <location>
        <position position="164"/>
    </location>
</feature>
<feature type="modified residue" description="Phosphoserine" evidence="1">
    <location>
        <position position="62"/>
    </location>
</feature>
<feature type="modified residue" description="Phosphoserine" evidence="1">
    <location>
        <position position="73"/>
    </location>
</feature>
<feature type="modified residue" description="Phosphoserine" evidence="10">
    <location>
        <position position="302"/>
    </location>
</feature>
<feature type="modified residue" description="Phosphoserine" evidence="1">
    <location>
        <position position="406"/>
    </location>
</feature>
<feature type="modified residue" description="Phosphoserine" evidence="1">
    <location>
        <position position="537"/>
    </location>
</feature>
<feature type="modified residue" description="Phosphoserine" evidence="1">
    <location>
        <position position="542"/>
    </location>
</feature>
<feature type="modified residue" description="Phosphoserine" evidence="1">
    <location>
        <position position="571"/>
    </location>
</feature>
<dbReference type="EMBL" id="AB096213">
    <property type="protein sequence ID" value="BAD01656.1"/>
    <property type="molecule type" value="mRNA"/>
</dbReference>
<dbReference type="EMBL" id="BC085848">
    <property type="protein sequence ID" value="AAH85848.1"/>
    <property type="molecule type" value="mRNA"/>
</dbReference>
<dbReference type="RefSeq" id="NP_955422.1">
    <property type="nucleotide sequence ID" value="NM_199390.2"/>
</dbReference>
<dbReference type="RefSeq" id="XP_006246551.1">
    <property type="nucleotide sequence ID" value="XM_006246489.5"/>
</dbReference>
<dbReference type="RefSeq" id="XP_006246552.1">
    <property type="nucleotide sequence ID" value="XM_006246490.4"/>
</dbReference>
<dbReference type="RefSeq" id="XP_017452756.1">
    <property type="nucleotide sequence ID" value="XM_017597267.3"/>
</dbReference>
<dbReference type="RefSeq" id="XP_038941879.1">
    <property type="nucleotide sequence ID" value="XM_039085951.2"/>
</dbReference>
<dbReference type="RefSeq" id="XP_038941880.1">
    <property type="nucleotide sequence ID" value="XM_039085952.2"/>
</dbReference>
<dbReference type="RefSeq" id="XP_063125068.1">
    <property type="nucleotide sequence ID" value="XM_063268998.1"/>
</dbReference>
<dbReference type="RefSeq" id="XP_063125069.1">
    <property type="nucleotide sequence ID" value="XM_063268999.1"/>
</dbReference>
<dbReference type="RefSeq" id="XP_063125070.1">
    <property type="nucleotide sequence ID" value="XM_063269000.1"/>
</dbReference>
<dbReference type="RefSeq" id="XP_063125071.1">
    <property type="nucleotide sequence ID" value="XM_063269001.1"/>
</dbReference>
<dbReference type="RefSeq" id="XP_063125072.1">
    <property type="nucleotide sequence ID" value="XM_063269002.1"/>
</dbReference>
<dbReference type="SMR" id="Q76JQ2"/>
<dbReference type="BioGRID" id="257434">
    <property type="interactions" value="3"/>
</dbReference>
<dbReference type="FunCoup" id="Q76JQ2">
    <property type="interactions" value="2752"/>
</dbReference>
<dbReference type="IntAct" id="Q76JQ2">
    <property type="interactions" value="4"/>
</dbReference>
<dbReference type="MINT" id="Q76JQ2"/>
<dbReference type="STRING" id="10116.ENSRNOP00000004412"/>
<dbReference type="iPTMnet" id="Q76JQ2"/>
<dbReference type="PhosphoSitePlus" id="Q76JQ2"/>
<dbReference type="PaxDb" id="10116-ENSRNOP00000004412"/>
<dbReference type="Ensembl" id="ENSRNOT00000004412.6">
    <property type="protein sequence ID" value="ENSRNOP00000004412.3"/>
    <property type="gene ID" value="ENSRNOG00000003302.6"/>
</dbReference>
<dbReference type="GeneID" id="303185"/>
<dbReference type="KEGG" id="rno:303185"/>
<dbReference type="UCSC" id="RGD:735088">
    <property type="organism name" value="rat"/>
</dbReference>
<dbReference type="AGR" id="RGD:735088"/>
<dbReference type="CTD" id="201163"/>
<dbReference type="RGD" id="735088">
    <property type="gene designation" value="Flcn"/>
</dbReference>
<dbReference type="eggNOG" id="KOG3715">
    <property type="taxonomic scope" value="Eukaryota"/>
</dbReference>
<dbReference type="GeneTree" id="ENSGT00390000009864"/>
<dbReference type="HOGENOM" id="CLU_035854_2_0_1"/>
<dbReference type="InParanoid" id="Q76JQ2"/>
<dbReference type="OMA" id="LWASLHC"/>
<dbReference type="OrthoDB" id="33998at9989"/>
<dbReference type="PhylomeDB" id="Q76JQ2"/>
<dbReference type="TreeFam" id="TF315084"/>
<dbReference type="Reactome" id="R-RNO-9639288">
    <property type="pathway name" value="Amino acids regulate mTORC1"/>
</dbReference>
<dbReference type="PRO" id="PR:Q76JQ2"/>
<dbReference type="Proteomes" id="UP000002494">
    <property type="component" value="Chromosome 10"/>
</dbReference>
<dbReference type="Bgee" id="ENSRNOG00000003302">
    <property type="expression patterns" value="Expressed in heart and 20 other cell types or tissues"/>
</dbReference>
<dbReference type="ExpressionAtlas" id="Q76JQ2">
    <property type="expression patterns" value="baseline and differential"/>
</dbReference>
<dbReference type="GO" id="GO:0044291">
    <property type="term" value="C:cell-cell contact zone"/>
    <property type="evidence" value="ECO:0000266"/>
    <property type="project" value="RGD"/>
</dbReference>
<dbReference type="GO" id="GO:0005813">
    <property type="term" value="C:centrosome"/>
    <property type="evidence" value="ECO:0000250"/>
    <property type="project" value="UniProtKB"/>
</dbReference>
<dbReference type="GO" id="GO:0005929">
    <property type="term" value="C:cilium"/>
    <property type="evidence" value="ECO:0000250"/>
    <property type="project" value="UniProtKB"/>
</dbReference>
<dbReference type="GO" id="GO:0005737">
    <property type="term" value="C:cytoplasm"/>
    <property type="evidence" value="ECO:0000250"/>
    <property type="project" value="UniProtKB"/>
</dbReference>
<dbReference type="GO" id="GO:0005829">
    <property type="term" value="C:cytosol"/>
    <property type="evidence" value="ECO:0000250"/>
    <property type="project" value="UniProtKB"/>
</dbReference>
<dbReference type="GO" id="GO:1990877">
    <property type="term" value="C:FNIP-folliculin RagC/D GAP"/>
    <property type="evidence" value="ECO:0000250"/>
    <property type="project" value="UniProtKB"/>
</dbReference>
<dbReference type="GO" id="GO:0005765">
    <property type="term" value="C:lysosomal membrane"/>
    <property type="evidence" value="ECO:0000250"/>
    <property type="project" value="UniProtKB"/>
</dbReference>
<dbReference type="GO" id="GO:0030496">
    <property type="term" value="C:midbody"/>
    <property type="evidence" value="ECO:0000266"/>
    <property type="project" value="RGD"/>
</dbReference>
<dbReference type="GO" id="GO:0072686">
    <property type="term" value="C:mitotic spindle"/>
    <property type="evidence" value="ECO:0000250"/>
    <property type="project" value="UniProtKB"/>
</dbReference>
<dbReference type="GO" id="GO:0005634">
    <property type="term" value="C:nucleus"/>
    <property type="evidence" value="ECO:0000250"/>
    <property type="project" value="UniProtKB"/>
</dbReference>
<dbReference type="GO" id="GO:0005886">
    <property type="term" value="C:plasma membrane"/>
    <property type="evidence" value="ECO:0000250"/>
    <property type="project" value="UniProtKB"/>
</dbReference>
<dbReference type="GO" id="GO:0019899">
    <property type="term" value="F:enzyme binding"/>
    <property type="evidence" value="ECO:0000266"/>
    <property type="project" value="RGD"/>
</dbReference>
<dbReference type="GO" id="GO:0004857">
    <property type="term" value="F:enzyme inhibitor activity"/>
    <property type="evidence" value="ECO:0000266"/>
    <property type="project" value="RGD"/>
</dbReference>
<dbReference type="GO" id="GO:0005096">
    <property type="term" value="F:GTPase activator activity"/>
    <property type="evidence" value="ECO:0000250"/>
    <property type="project" value="UniProtKB"/>
</dbReference>
<dbReference type="GO" id="GO:0044877">
    <property type="term" value="F:protein-containing complex binding"/>
    <property type="evidence" value="ECO:0000250"/>
    <property type="project" value="UniProtKB"/>
</dbReference>
<dbReference type="GO" id="GO:0072111">
    <property type="term" value="P:cell proliferation involved in kidney development"/>
    <property type="evidence" value="ECO:0000266"/>
    <property type="project" value="RGD"/>
</dbReference>
<dbReference type="GO" id="GO:0007043">
    <property type="term" value="P:cell-cell junction assembly"/>
    <property type="evidence" value="ECO:0000250"/>
    <property type="project" value="UniProtKB"/>
</dbReference>
<dbReference type="GO" id="GO:0034198">
    <property type="term" value="P:cellular response to amino acid starvation"/>
    <property type="evidence" value="ECO:0000250"/>
    <property type="project" value="UniProtKB"/>
</dbReference>
<dbReference type="GO" id="GO:0009267">
    <property type="term" value="P:cellular response to starvation"/>
    <property type="evidence" value="ECO:0000250"/>
    <property type="project" value="UniProtKB"/>
</dbReference>
<dbReference type="GO" id="GO:0097009">
    <property type="term" value="P:energy homeostasis"/>
    <property type="evidence" value="ECO:0000250"/>
    <property type="project" value="UniProtKB"/>
</dbReference>
<dbReference type="GO" id="GO:0050673">
    <property type="term" value="P:epithelial cell proliferation"/>
    <property type="evidence" value="ECO:0000266"/>
    <property type="project" value="RGD"/>
</dbReference>
<dbReference type="GO" id="GO:0070371">
    <property type="term" value="P:ERK1 and ERK2 cascade"/>
    <property type="evidence" value="ECO:0000266"/>
    <property type="project" value="RGD"/>
</dbReference>
<dbReference type="GO" id="GO:0030097">
    <property type="term" value="P:hemopoiesis"/>
    <property type="evidence" value="ECO:0000250"/>
    <property type="project" value="UniProtKB"/>
</dbReference>
<dbReference type="GO" id="GO:0001701">
    <property type="term" value="P:in utero embryonic development"/>
    <property type="evidence" value="ECO:0000250"/>
    <property type="project" value="UniProtKB"/>
</dbReference>
<dbReference type="GO" id="GO:0035556">
    <property type="term" value="P:intracellular signal transduction"/>
    <property type="evidence" value="ECO:0000250"/>
    <property type="project" value="UniProtKB"/>
</dbReference>
<dbReference type="GO" id="GO:0097193">
    <property type="term" value="P:intrinsic apoptotic signaling pathway"/>
    <property type="evidence" value="ECO:0000266"/>
    <property type="project" value="RGD"/>
</dbReference>
<dbReference type="GO" id="GO:0032418">
    <property type="term" value="P:lysosome localization"/>
    <property type="evidence" value="ECO:0000250"/>
    <property type="project" value="UniProtKB"/>
</dbReference>
<dbReference type="GO" id="GO:1903444">
    <property type="term" value="P:negative regulation of brown fat cell differentiation"/>
    <property type="evidence" value="ECO:0000250"/>
    <property type="project" value="UniProtKB"/>
</dbReference>
<dbReference type="GO" id="GO:0008285">
    <property type="term" value="P:negative regulation of cell population proliferation"/>
    <property type="evidence" value="ECO:0000266"/>
    <property type="project" value="RGD"/>
</dbReference>
<dbReference type="GO" id="GO:1901723">
    <property type="term" value="P:negative regulation of cell proliferation involved in kidney development"/>
    <property type="evidence" value="ECO:0000250"/>
    <property type="project" value="UniProtKB"/>
</dbReference>
<dbReference type="GO" id="GO:0120163">
    <property type="term" value="P:negative regulation of cold-induced thermogenesis"/>
    <property type="evidence" value="ECO:0000250"/>
    <property type="project" value="YuBioLab"/>
</dbReference>
<dbReference type="GO" id="GO:0045892">
    <property type="term" value="P:negative regulation of DNA-templated transcription"/>
    <property type="evidence" value="ECO:0000266"/>
    <property type="project" value="RGD"/>
</dbReference>
<dbReference type="GO" id="GO:0050680">
    <property type="term" value="P:negative regulation of epithelial cell proliferation"/>
    <property type="evidence" value="ECO:0000266"/>
    <property type="project" value="RGD"/>
</dbReference>
<dbReference type="GO" id="GO:0070373">
    <property type="term" value="P:negative regulation of ERK1 and ERK2 cascade"/>
    <property type="evidence" value="ECO:0000250"/>
    <property type="project" value="UniProtKB"/>
</dbReference>
<dbReference type="GO" id="GO:0045820">
    <property type="term" value="P:negative regulation of glycolytic process"/>
    <property type="evidence" value="ECO:0000266"/>
    <property type="project" value="RGD"/>
</dbReference>
<dbReference type="GO" id="GO:1905672">
    <property type="term" value="P:negative regulation of lysosome organization"/>
    <property type="evidence" value="ECO:0000266"/>
    <property type="project" value="RGD"/>
</dbReference>
<dbReference type="GO" id="GO:0051898">
    <property type="term" value="P:negative regulation of phosphatidylinositol 3-kinase/protein kinase B signal transduction"/>
    <property type="evidence" value="ECO:0000250"/>
    <property type="project" value="UniProtKB"/>
</dbReference>
<dbReference type="GO" id="GO:1901874">
    <property type="term" value="P:negative regulation of post-translational protein modification"/>
    <property type="evidence" value="ECO:0000266"/>
    <property type="project" value="RGD"/>
</dbReference>
<dbReference type="GO" id="GO:0035024">
    <property type="term" value="P:negative regulation of Rho protein signal transduction"/>
    <property type="evidence" value="ECO:0000250"/>
    <property type="project" value="UniProtKB"/>
</dbReference>
<dbReference type="GO" id="GO:0032007">
    <property type="term" value="P:negative regulation of TOR signaling"/>
    <property type="evidence" value="ECO:0000250"/>
    <property type="project" value="UniProtKB"/>
</dbReference>
<dbReference type="GO" id="GO:0000122">
    <property type="term" value="P:negative regulation of transcription by RNA polymerase II"/>
    <property type="evidence" value="ECO:0000250"/>
    <property type="project" value="UniProtKB"/>
</dbReference>
<dbReference type="GO" id="GO:0043491">
    <property type="term" value="P:phosphatidylinositol 3-kinase/protein kinase B signal transduction"/>
    <property type="evidence" value="ECO:0000266"/>
    <property type="project" value="RGD"/>
</dbReference>
<dbReference type="GO" id="GO:0043065">
    <property type="term" value="P:positive regulation of apoptotic process"/>
    <property type="evidence" value="ECO:0000250"/>
    <property type="project" value="UniProtKB"/>
</dbReference>
<dbReference type="GO" id="GO:0010508">
    <property type="term" value="P:positive regulation of autophagy"/>
    <property type="evidence" value="ECO:0000250"/>
    <property type="project" value="UniProtKB"/>
</dbReference>
<dbReference type="GO" id="GO:2001244">
    <property type="term" value="P:positive regulation of intrinsic apoptotic signaling pathway"/>
    <property type="evidence" value="ECO:0000266"/>
    <property type="project" value="RGD"/>
</dbReference>
<dbReference type="GO" id="GO:0032008">
    <property type="term" value="P:positive regulation of TOR signaling"/>
    <property type="evidence" value="ECO:0000250"/>
    <property type="project" value="UniProtKB"/>
</dbReference>
<dbReference type="GO" id="GO:1904263">
    <property type="term" value="P:positive regulation of TORC1 signaling"/>
    <property type="evidence" value="ECO:0000250"/>
    <property type="project" value="UniProtKB"/>
</dbReference>
<dbReference type="GO" id="GO:0030511">
    <property type="term" value="P:positive regulation of transforming growth factor beta receptor signaling pathway"/>
    <property type="evidence" value="ECO:0000250"/>
    <property type="project" value="UniProtKB"/>
</dbReference>
<dbReference type="GO" id="GO:2000973">
    <property type="term" value="P:regulation of pro-B cell differentiation"/>
    <property type="evidence" value="ECO:0000250"/>
    <property type="project" value="UniProtKB"/>
</dbReference>
<dbReference type="GO" id="GO:0046578">
    <property type="term" value="P:regulation of Ras protein signal transduction"/>
    <property type="evidence" value="ECO:0000250"/>
    <property type="project" value="UniProtKB"/>
</dbReference>
<dbReference type="GO" id="GO:0032006">
    <property type="term" value="P:regulation of TOR signaling"/>
    <property type="evidence" value="ECO:0000250"/>
    <property type="project" value="UniProtKB"/>
</dbReference>
<dbReference type="GO" id="GO:0031929">
    <property type="term" value="P:TOR signaling"/>
    <property type="evidence" value="ECO:0000266"/>
    <property type="project" value="RGD"/>
</dbReference>
<dbReference type="GO" id="GO:0007179">
    <property type="term" value="P:transforming growth factor beta receptor signaling pathway"/>
    <property type="evidence" value="ECO:0000266"/>
    <property type="project" value="RGD"/>
</dbReference>
<dbReference type="FunFam" id="1.10.10.1730:FF:000001">
    <property type="entry name" value="Folliculin"/>
    <property type="match status" value="1"/>
</dbReference>
<dbReference type="FunFam" id="3.40.50.12430:FF:000001">
    <property type="entry name" value="Folliculin"/>
    <property type="match status" value="1"/>
</dbReference>
<dbReference type="Gene3D" id="3.40.50.12430">
    <property type="match status" value="1"/>
</dbReference>
<dbReference type="Gene3D" id="1.10.10.1730">
    <property type="entry name" value="Folliculin"/>
    <property type="match status" value="1"/>
</dbReference>
<dbReference type="InterPro" id="IPR037521">
    <property type="entry name" value="FLCN/SMCR8_DENN"/>
</dbReference>
<dbReference type="InterPro" id="IPR044886">
    <property type="entry name" value="FLCN_DENN_C_sf"/>
</dbReference>
<dbReference type="InterPro" id="IPR021713">
    <property type="entry name" value="Folliculin"/>
</dbReference>
<dbReference type="InterPro" id="IPR037520">
    <property type="entry name" value="Folliculin/SMCR8_longin"/>
</dbReference>
<dbReference type="InterPro" id="IPR032035">
    <property type="entry name" value="Folliculin_DENN"/>
</dbReference>
<dbReference type="PANTHER" id="PTHR31441:SF2">
    <property type="entry name" value="FOLLICULIN"/>
    <property type="match status" value="1"/>
</dbReference>
<dbReference type="PANTHER" id="PTHR31441">
    <property type="entry name" value="FOLLICULIN FAMILY MEMBER"/>
    <property type="match status" value="1"/>
</dbReference>
<dbReference type="Pfam" id="PF11704">
    <property type="entry name" value="Folliculin"/>
    <property type="match status" value="1"/>
</dbReference>
<dbReference type="Pfam" id="PF16692">
    <property type="entry name" value="Folliculin_C"/>
    <property type="match status" value="1"/>
</dbReference>
<dbReference type="PROSITE" id="PS51834">
    <property type="entry name" value="DENN_FLCN_SMCR8"/>
    <property type="match status" value="1"/>
</dbReference>
<reference key="1">
    <citation type="journal article" date="2004" name="Proc. Natl. Acad. Sci. U.S.A.">
        <title>A germ-line insertion in the Birt-Hogg-Dube (BHD) gene gives rise to the Nihon rat model of inherited renal cancer.</title>
        <authorList>
            <person name="Okimoto K."/>
            <person name="Sakurai J."/>
            <person name="Kobayashi T."/>
            <person name="Mitani H."/>
            <person name="Hirayama Y."/>
            <person name="Nickerson M.L."/>
            <person name="Warren M.B."/>
            <person name="Zbar B."/>
            <person name="Schmidt L.S."/>
            <person name="Hino O."/>
        </authorList>
    </citation>
    <scope>NUCLEOTIDE SEQUENCE [MRNA]</scope>
    <scope>TISSUE SPECIFICITY</scope>
    <scope>POSSIBLE INVOLVEMENT IN RENAL CELL CARCINOMA</scope>
    <source>
        <tissue>Kidney</tissue>
    </source>
</reference>
<reference key="2">
    <citation type="journal article" date="2004" name="Genome Res.">
        <title>The status, quality, and expansion of the NIH full-length cDNA project: the Mammalian Gene Collection (MGC).</title>
        <authorList>
            <consortium name="The MGC Project Team"/>
        </authorList>
    </citation>
    <scope>NUCLEOTIDE SEQUENCE [LARGE SCALE MRNA]</scope>
    <source>
        <tissue>Heart</tissue>
    </source>
</reference>
<reference key="3">
    <citation type="journal article" date="2012" name="Nat. Commun.">
        <title>Quantitative maps of protein phosphorylation sites across 14 different rat organs and tissues.</title>
        <authorList>
            <person name="Lundby A."/>
            <person name="Secher A."/>
            <person name="Lage K."/>
            <person name="Nordsborg N.B."/>
            <person name="Dmytriyev A."/>
            <person name="Lundby C."/>
            <person name="Olsen J.V."/>
        </authorList>
    </citation>
    <scope>PHOSPHORYLATION [LARGE SCALE ANALYSIS] AT SER-302</scope>
    <scope>IDENTIFICATION BY MASS SPECTROMETRY [LARGE SCALE ANALYSIS]</scope>
</reference>
<keyword id="KW-0966">Cell projection</keyword>
<keyword id="KW-0175">Coiled coil</keyword>
<keyword id="KW-0963">Cytoplasm</keyword>
<keyword id="KW-0206">Cytoskeleton</keyword>
<keyword id="KW-0343">GTPase activation</keyword>
<keyword id="KW-0458">Lysosome</keyword>
<keyword id="KW-0472">Membrane</keyword>
<keyword id="KW-0539">Nucleus</keyword>
<keyword id="KW-0597">Phosphoprotein</keyword>
<keyword id="KW-1185">Reference proteome</keyword>
<keyword id="KW-0043">Tumor suppressor</keyword>
<organism>
    <name type="scientific">Rattus norvegicus</name>
    <name type="common">Rat</name>
    <dbReference type="NCBI Taxonomy" id="10116"/>
    <lineage>
        <taxon>Eukaryota</taxon>
        <taxon>Metazoa</taxon>
        <taxon>Chordata</taxon>
        <taxon>Craniata</taxon>
        <taxon>Vertebrata</taxon>
        <taxon>Euteleostomi</taxon>
        <taxon>Mammalia</taxon>
        <taxon>Eutheria</taxon>
        <taxon>Euarchontoglires</taxon>
        <taxon>Glires</taxon>
        <taxon>Rodentia</taxon>
        <taxon>Myomorpha</taxon>
        <taxon>Muroidea</taxon>
        <taxon>Muridae</taxon>
        <taxon>Murinae</taxon>
        <taxon>Rattus</taxon>
    </lineage>
</organism>
<proteinExistence type="evidence at protein level"/>
<protein>
    <recommendedName>
        <fullName evidence="1">Folliculin</fullName>
    </recommendedName>
    <alternativeName>
        <fullName evidence="7">Birt-Hogg-Dube syndrome protein homolog</fullName>
    </alternativeName>
</protein>
<comment type="function">
    <text evidence="1 2">Multi-functional protein, involved in both the cellular response to amino acid availability and in the regulation of glycolysis (By similarity). GTPase-activating protein that plays a key role in the cellular response to amino acid availability through regulation of the non-canonical mTORC1 signaling cascade controlling the MiT/TFE factors TFEB and TFE3 (By similarity). Activates mTORC1 by acting as a GTPase-activating protein: specifically stimulates GTP hydrolysis by RagC/RRAGC or RagD/RRAGD, promoting the conversion to the GDP-bound state of RagC/RRAGC or RagD/RRAGD, and thereby activating the kinase activity of mTORC1 (By similarity). The GTPase-activating activity is inhibited during starvation and activated in presence of nutrients (By similarity). Acts as a key component for non-canonical mTORC1-dependent control of the MiT/TFE factors TFEB and TFE3, while it is not involved in mTORC1-dependent phosphorylation of canonical RPS6KB1/S6K1 and EIF4EBP1/4E-BP1 (By similarity). In low-amino acid conditions, the lysosomal folliculin complex (LFC) is formed on the membrane of lysosomes, which inhibits the GTPase-activating activity of FLCN, inactivates mTORC1 and maximizes nuclear translocation of TFEB and TFE3 (By similarity). Upon amino acid restimulation, RagA/RRAGA (or RagB/RRAGB) nucleotide exchange promotes disassembly of the LFC complex and liberates the GTPase-activating activity of FLCN, leading to activation of mTORC1 and subsequent cytoplasmic retention of TFEB and TFE3 (By similarity). Indirectly acts as a positive regulator of Wnt signaling by promoting mTOR-dependent cytoplasmic retention of MiT/TFE factor TFE3 (By similarity). Required for the exit of hematopoietic stem cell from pluripotency by promoting mTOR-dependent cytoplasmic retention of TFE3, thereby increasing Wnt signaling (By similarity). Involved in the control of embryonic stem cells differentiation; together with LAMTOR1 it is necessary to recruit and activate RagC/RRAGC and RagD/RRAGD at the lysosomes, and to induce exit of embryonic stem cells from pluripotency via non-canonical, mTOR-independent TFE3 inactivation (By similarity). Acts as an inhibitor of browning of adipose tissue by regulating mTOR-dependent cytoplasmic retention of TFE3 (By similarity). In response to flow stress, regulates STK11/LKB1 accumulation and mTORC1 activation through primary cilia: may act by recruiting STK11/LKB1 to primary cilia for activation of AMPK resided at basal bodies, causing mTORC1 down-regulation (By similarity). Together with FNIP1 and/or FNIP2, regulates autophagy: following phosphorylation by ULK1, interacts with GABARAP and promotes autophagy (By similarity). Required for starvation-induced perinuclear clustering of lysosomes by promoting association of RILP with its effector RAB34 (By similarity). Regulates glycolysis by binding to lactate dehydrogenase LDHA, acting as an uncompetitive inhibitor (By similarity).</text>
</comment>
<comment type="activity regulation">
    <text evidence="1">GTPase-activating activity is inhibited in the folliculin complex (LFC), which stabilizes the GDP-bound state of RagA/RRAGA (or RagB/RRAGB), because Arg-164 is located far from the RagC/RRAGC or RagD/RRAGD nucleotide pocket. Disassembly of the LFC complex upon amino acid restimulation liberates the GTPase-activating activity.</text>
</comment>
<comment type="subunit">
    <text evidence="1">Interacts (via C-terminus) with FNIP1 or FNIP2 (via C-terminus). Component of the lysosomal folliculin complex (LFC), composed of FLCN, FNIP1 (or FNIP2), RagA/RRAGA or RagB/RRAGB GDP-bound, RagC/RRAGC or RagD/RRAGD GTP-bound, and Ragulator. Interaction with FNIP1 or FNIP2 mediates indirect interaction with the PRKAA1, PRKAB1 and PRKAG1 subunits of 5'-AMP-activated protein kinase (AMPK). Interacts with HSP90AA1 in the presence of FNIP1. Interacts with HSP70, STUB1, CDC37, AHSA1, CCT2, STIP1, PTGES3 and PPP5C (By similarity). Interacts with GABARAP; interaction takes place in the presence of FNIP1 and/or FNIP2 (By similarity). Interacts with RILP; the interaction is direct and promotes association between RILP and RAB34 (By similarity). Interacts with KIF3A and KIF3B (By similarity). Interacts with lactate dehydrogenase LDHA, but not LDHB; the interaction is direct, may preferentially bind LDHA dimers rather than tetramers, and regulates LDHA activity, acting as an uncompetitive inhibitor.</text>
</comment>
<comment type="interaction">
    <interactant intactId="EBI-7596839">
        <id>Q76JQ2</id>
    </interactant>
    <interactant intactId="EBI-7596967">
        <id>P54645</id>
        <label>Prkaa1</label>
    </interactant>
    <organismsDiffer>false</organismsDiffer>
    <experiments>2</experiments>
</comment>
<comment type="subcellular location">
    <subcellularLocation>
        <location evidence="1">Lysosome membrane</location>
    </subcellularLocation>
    <subcellularLocation>
        <location evidence="1">Cytoplasm</location>
        <location evidence="1">Cytosol</location>
    </subcellularLocation>
    <subcellularLocation>
        <location evidence="1">Cell projection</location>
        <location evidence="1">Cilium</location>
    </subcellularLocation>
    <subcellularLocation>
        <location evidence="1">Cytoplasm</location>
        <location evidence="1">Cytoskeleton</location>
        <location evidence="1">Microtubule organizing center</location>
        <location evidence="1">Centrosome</location>
    </subcellularLocation>
    <subcellularLocation>
        <location evidence="1">Cytoplasm</location>
        <location evidence="1">Cytoskeleton</location>
        <location evidence="1">Spindle</location>
    </subcellularLocation>
    <subcellularLocation>
        <location evidence="1">Nucleus</location>
    </subcellularLocation>
    <text evidence="1">Localizes to lysosome membrane in amino acid-depleted conditions and relocalizes to the cytosol upon refeeding. Colocalizes with FNIP1 and FNIP2 in the cytoplasm. Also localizes to motile and non-motile cilia, centrosomes and the mitotic spindle.</text>
</comment>
<comment type="tissue specificity">
    <text evidence="6">Expressed in kidney.</text>
</comment>
<comment type="PTM">
    <text evidence="1">Phosphorylation by ULK1 modulates the interaction with GABARAP and is required to regulate autophagy.</text>
</comment>
<comment type="disease">
    <text evidence="6">Defects in Flcn may be involved in renal cell carcinoma.</text>
</comment>
<comment type="similarity">
    <text evidence="8">Belongs to the folliculin family.</text>
</comment>
<evidence type="ECO:0000250" key="1">
    <source>
        <dbReference type="UniProtKB" id="Q8NFG4"/>
    </source>
</evidence>
<evidence type="ECO:0000250" key="2">
    <source>
        <dbReference type="UniProtKB" id="Q8QZS3"/>
    </source>
</evidence>
<evidence type="ECO:0000255" key="3"/>
<evidence type="ECO:0000255" key="4">
    <source>
        <dbReference type="PROSITE-ProRule" id="PRU01178"/>
    </source>
</evidence>
<evidence type="ECO:0000256" key="5">
    <source>
        <dbReference type="SAM" id="MobiDB-lite"/>
    </source>
</evidence>
<evidence type="ECO:0000269" key="6">
    <source>
    </source>
</evidence>
<evidence type="ECO:0000303" key="7">
    <source>
    </source>
</evidence>
<evidence type="ECO:0000305" key="8"/>
<evidence type="ECO:0000312" key="9">
    <source>
        <dbReference type="RGD" id="735088"/>
    </source>
</evidence>
<evidence type="ECO:0007744" key="10">
    <source>
    </source>
</evidence>
<gene>
    <name evidence="9" type="primary">Flcn</name>
    <name evidence="7" type="synonym">Bhd</name>
</gene>
<name>FLCN_RAT</name>
<accession>Q76JQ2</accession>
<sequence length="579" mass="64122">MNAIVALCHFCELHGPRTLFCTEVLHAPLPQGAGSGDSPGQVEQAEEEEGGIQMSSRVRAHSPAEGASTDSSSPGPKKSDMCEGCRSLAVGHPGYISHDKETSIKYVSHQHPNHPQLFSIVRQACVRSLSCEVCPGREGPIFFGDEQHGFVFSHTFFIKDSLARGFQRWYSIIAIMMDRIYLINSWPFLLGKIRGIISELQGKALKVFEAEQFGCPQRAQRMNTAFTPFLHQRNGNAARSLTSLTSDDNLWACLHTSFAWLLKACGSRLTEKLLEGAPTEDTLVQMEKLADLEEESESWDNSEAEEEEKAPATAEGAEGRELASCPTESSFLSACGSWQPPKLSVFKSLRHMRQVLGAPSFRMLAWHVLMGNQVIWKSRDVNLVHSAFEVLRTMLPVGCVRIIPYSSQYEEAYRCNFLGLSPPVPIPAHVLASEFVVVVEVHTATRSNPHPAGCEDDQSLSKYEFVVTSGSPVAADRVGPTILNKMEAALTNQNLSVDVVDQCLVCLKEEWMNKVKVLFKFTKVDSRPKEDTQKLLSVLGASEEDNVKLLKFWMTGLSKTYKSHLMSTVRSPTAAESRN</sequence>